<evidence type="ECO:0000250" key="1"/>
<evidence type="ECO:0000255" key="2">
    <source>
        <dbReference type="PROSITE-ProRule" id="PRU00254"/>
    </source>
</evidence>
<evidence type="ECO:0007829" key="3">
    <source>
        <dbReference type="PDB" id="7CLA"/>
    </source>
</evidence>
<accession>P0CAV4</accession>
<accession>Q9RP67</accession>
<gene>
    <name type="primary">skgA</name>
    <name type="ordered locus">CC_0694</name>
</gene>
<comment type="function">
    <text evidence="1">Regulates the induction of katG (catalase-peroxidase) in stationary phase.</text>
</comment>
<name>SKGA_CAUVC</name>
<dbReference type="EMBL" id="AE005673">
    <property type="protein sequence ID" value="AAK22679.1"/>
    <property type="molecule type" value="Genomic_DNA"/>
</dbReference>
<dbReference type="PIR" id="C87335">
    <property type="entry name" value="C87335"/>
</dbReference>
<dbReference type="RefSeq" id="NP_419511.1">
    <property type="nucleotide sequence ID" value="NC_002696.2"/>
</dbReference>
<dbReference type="RefSeq" id="WP_010918580.1">
    <property type="nucleotide sequence ID" value="NC_002696.2"/>
</dbReference>
<dbReference type="PDB" id="7CLA">
    <property type="method" value="X-ray"/>
    <property type="resolution" value="2.50 A"/>
    <property type="chains" value="A=1-255"/>
</dbReference>
<dbReference type="PDBsum" id="7CLA"/>
<dbReference type="SMR" id="P0CAV4"/>
<dbReference type="STRING" id="190650.CC_0694"/>
<dbReference type="EnsemblBacteria" id="AAK22679">
    <property type="protein sequence ID" value="AAK22679"/>
    <property type="gene ID" value="CC_0694"/>
</dbReference>
<dbReference type="KEGG" id="ccr:CC_0694"/>
<dbReference type="PATRIC" id="fig|190650.5.peg.703"/>
<dbReference type="eggNOG" id="COG0789">
    <property type="taxonomic scope" value="Bacteria"/>
</dbReference>
<dbReference type="HOGENOM" id="CLU_060077_0_6_5"/>
<dbReference type="BioCyc" id="CAULO:CC0694-MONOMER"/>
<dbReference type="Proteomes" id="UP000001816">
    <property type="component" value="Chromosome"/>
</dbReference>
<dbReference type="GO" id="GO:0003677">
    <property type="term" value="F:DNA binding"/>
    <property type="evidence" value="ECO:0007669"/>
    <property type="project" value="UniProtKB-KW"/>
</dbReference>
<dbReference type="GO" id="GO:0003700">
    <property type="term" value="F:DNA-binding transcription factor activity"/>
    <property type="evidence" value="ECO:0007669"/>
    <property type="project" value="InterPro"/>
</dbReference>
<dbReference type="CDD" id="cd01106">
    <property type="entry name" value="HTH_TipAL-Mta"/>
    <property type="match status" value="1"/>
</dbReference>
<dbReference type="Gene3D" id="1.10.1660.10">
    <property type="match status" value="1"/>
</dbReference>
<dbReference type="Gene3D" id="1.10.490.50">
    <property type="entry name" value="Antibiotic binding domain of TipA-like multidrug resistance regulators"/>
    <property type="match status" value="1"/>
</dbReference>
<dbReference type="InterPro" id="IPR009061">
    <property type="entry name" value="DNA-bd_dom_put_sf"/>
</dbReference>
<dbReference type="InterPro" id="IPR000551">
    <property type="entry name" value="MerR-type_HTH_dom"/>
</dbReference>
<dbReference type="InterPro" id="IPR047057">
    <property type="entry name" value="MerR_fam"/>
</dbReference>
<dbReference type="InterPro" id="IPR036244">
    <property type="entry name" value="TipA-like_antibiotic-bd"/>
</dbReference>
<dbReference type="InterPro" id="IPR012925">
    <property type="entry name" value="TipAS_dom"/>
</dbReference>
<dbReference type="PANTHER" id="PTHR30204:SF90">
    <property type="entry name" value="HTH-TYPE TRANSCRIPTIONAL ACTIVATOR MTA"/>
    <property type="match status" value="1"/>
</dbReference>
<dbReference type="PANTHER" id="PTHR30204">
    <property type="entry name" value="REDOX-CYCLING DRUG-SENSING TRANSCRIPTIONAL ACTIVATOR SOXR"/>
    <property type="match status" value="1"/>
</dbReference>
<dbReference type="Pfam" id="PF13411">
    <property type="entry name" value="MerR_1"/>
    <property type="match status" value="1"/>
</dbReference>
<dbReference type="Pfam" id="PF07739">
    <property type="entry name" value="TipAS"/>
    <property type="match status" value="1"/>
</dbReference>
<dbReference type="SMART" id="SM00422">
    <property type="entry name" value="HTH_MERR"/>
    <property type="match status" value="1"/>
</dbReference>
<dbReference type="SUPFAM" id="SSF89082">
    <property type="entry name" value="Antibiotic binding domain of TipA-like multidrug resistance regulators"/>
    <property type="match status" value="1"/>
</dbReference>
<dbReference type="SUPFAM" id="SSF46955">
    <property type="entry name" value="Putative DNA-binding domain"/>
    <property type="match status" value="1"/>
</dbReference>
<dbReference type="PROSITE" id="PS50937">
    <property type="entry name" value="HTH_MERR_2"/>
    <property type="match status" value="1"/>
</dbReference>
<reference key="1">
    <citation type="journal article" date="2001" name="Proc. Natl. Acad. Sci. U.S.A.">
        <title>Complete genome sequence of Caulobacter crescentus.</title>
        <authorList>
            <person name="Nierman W.C."/>
            <person name="Feldblyum T.V."/>
            <person name="Laub M.T."/>
            <person name="Paulsen I.T."/>
            <person name="Nelson K.E."/>
            <person name="Eisen J.A."/>
            <person name="Heidelberg J.F."/>
            <person name="Alley M.R.K."/>
            <person name="Ohta N."/>
            <person name="Maddock J.R."/>
            <person name="Potocka I."/>
            <person name="Nelson W.C."/>
            <person name="Newton A."/>
            <person name="Stephens C."/>
            <person name="Phadke N.D."/>
            <person name="Ely B."/>
            <person name="DeBoy R.T."/>
            <person name="Dodson R.J."/>
            <person name="Durkin A.S."/>
            <person name="Gwinn M.L."/>
            <person name="Haft D.H."/>
            <person name="Kolonay J.F."/>
            <person name="Smit J."/>
            <person name="Craven M.B."/>
            <person name="Khouri H.M."/>
            <person name="Shetty J."/>
            <person name="Berry K.J."/>
            <person name="Utterback T.R."/>
            <person name="Tran K."/>
            <person name="Wolf A.M."/>
            <person name="Vamathevan J.J."/>
            <person name="Ermolaeva M.D."/>
            <person name="White O."/>
            <person name="Salzberg S.L."/>
            <person name="Venter J.C."/>
            <person name="Shapiro L."/>
            <person name="Fraser C.M."/>
        </authorList>
    </citation>
    <scope>NUCLEOTIDE SEQUENCE [LARGE SCALE GENOMIC DNA]</scope>
    <source>
        <strain>ATCC 19089 / CIP 103742 / CB 15</strain>
    </source>
</reference>
<organism>
    <name type="scientific">Caulobacter vibrioides (strain ATCC 19089 / CIP 103742 / CB 15)</name>
    <name type="common">Caulobacter crescentus</name>
    <dbReference type="NCBI Taxonomy" id="190650"/>
    <lineage>
        <taxon>Bacteria</taxon>
        <taxon>Pseudomonadati</taxon>
        <taxon>Pseudomonadota</taxon>
        <taxon>Alphaproteobacteria</taxon>
        <taxon>Caulobacterales</taxon>
        <taxon>Caulobacteraceae</taxon>
        <taxon>Caulobacter</taxon>
    </lineage>
</organism>
<protein>
    <recommendedName>
        <fullName>HTH-type transcriptional regulator SkgA</fullName>
    </recommendedName>
    <alternativeName>
        <fullName>Stationary-phase regulation of KatG protein</fullName>
    </alternativeName>
</protein>
<feature type="chain" id="PRO_0000098149" description="HTH-type transcriptional regulator SkgA">
    <location>
        <begin position="1"/>
        <end position="255"/>
    </location>
</feature>
<feature type="domain" description="HTH merR-type" evidence="2">
    <location>
        <begin position="3"/>
        <end position="72"/>
    </location>
</feature>
<feature type="DNA-binding region" description="H-T-H motif" evidence="2">
    <location>
        <begin position="6"/>
        <end position="25"/>
    </location>
</feature>
<feature type="helix" evidence="3">
    <location>
        <begin position="6"/>
        <end position="13"/>
    </location>
</feature>
<feature type="helix" evidence="3">
    <location>
        <begin position="17"/>
        <end position="25"/>
    </location>
</feature>
<feature type="strand" evidence="3">
    <location>
        <begin position="40"/>
        <end position="42"/>
    </location>
</feature>
<feature type="helix" evidence="3">
    <location>
        <begin position="44"/>
        <end position="58"/>
    </location>
</feature>
<feature type="helix" evidence="3">
    <location>
        <begin position="63"/>
        <end position="71"/>
    </location>
</feature>
<feature type="helix" evidence="3">
    <location>
        <begin position="77"/>
        <end position="109"/>
    </location>
</feature>
<feature type="turn" evidence="3">
    <location>
        <begin position="110"/>
        <end position="112"/>
    </location>
</feature>
<feature type="helix" evidence="3">
    <location>
        <begin position="117"/>
        <end position="120"/>
    </location>
</feature>
<feature type="helix" evidence="3">
    <location>
        <begin position="126"/>
        <end position="136"/>
    </location>
</feature>
<keyword id="KW-0002">3D-structure</keyword>
<keyword id="KW-0010">Activator</keyword>
<keyword id="KW-0238">DNA-binding</keyword>
<keyword id="KW-1185">Reference proteome</keyword>
<keyword id="KW-0804">Transcription</keyword>
<keyword id="KW-0805">Transcription regulation</keyword>
<proteinExistence type="evidence at protein level"/>
<sequence>MSVYTVKQMARLSGVSVRALHHYDAIGLLKPRAVGANGYRYYDRQDLLRLQQILFHRALETPLKDIQAALDQPGFDLAAALRAQRERLAAQAERYARLVDVVDRTLADLEGDETMDDKHLFEGFDPEKQARHEAWLVEHYGDEATRRIADAKAGMKSWGKKDWSQFQEEAKAIEHDLAKALTQGLPVDSAPVTAIMRRHWAWVGRSWNREPTPDAFAGLGHLYQANPEFTARYEAIAPGLTEYFSEAMRAFARGR</sequence>